<accession>Q03AI1</accession>
<reference key="1">
    <citation type="journal article" date="2006" name="Proc. Natl. Acad. Sci. U.S.A.">
        <title>Comparative genomics of the lactic acid bacteria.</title>
        <authorList>
            <person name="Makarova K.S."/>
            <person name="Slesarev A."/>
            <person name="Wolf Y.I."/>
            <person name="Sorokin A."/>
            <person name="Mirkin B."/>
            <person name="Koonin E.V."/>
            <person name="Pavlov A."/>
            <person name="Pavlova N."/>
            <person name="Karamychev V."/>
            <person name="Polouchine N."/>
            <person name="Shakhova V."/>
            <person name="Grigoriev I."/>
            <person name="Lou Y."/>
            <person name="Rohksar D."/>
            <person name="Lucas S."/>
            <person name="Huang K."/>
            <person name="Goodstein D.M."/>
            <person name="Hawkins T."/>
            <person name="Plengvidhya V."/>
            <person name="Welker D."/>
            <person name="Hughes J."/>
            <person name="Goh Y."/>
            <person name="Benson A."/>
            <person name="Baldwin K."/>
            <person name="Lee J.-H."/>
            <person name="Diaz-Muniz I."/>
            <person name="Dosti B."/>
            <person name="Smeianov V."/>
            <person name="Wechter W."/>
            <person name="Barabote R."/>
            <person name="Lorca G."/>
            <person name="Altermann E."/>
            <person name="Barrangou R."/>
            <person name="Ganesan B."/>
            <person name="Xie Y."/>
            <person name="Rawsthorne H."/>
            <person name="Tamir D."/>
            <person name="Parker C."/>
            <person name="Breidt F."/>
            <person name="Broadbent J.R."/>
            <person name="Hutkins R."/>
            <person name="O'Sullivan D."/>
            <person name="Steele J."/>
            <person name="Unlu G."/>
            <person name="Saier M.H. Jr."/>
            <person name="Klaenhammer T."/>
            <person name="Richardson P."/>
            <person name="Kozyavkin S."/>
            <person name="Weimer B.C."/>
            <person name="Mills D.A."/>
        </authorList>
    </citation>
    <scope>NUCLEOTIDE SEQUENCE [LARGE SCALE GENOMIC DNA]</scope>
    <source>
        <strain>ATCC 334 / BCRC 17002 / CCUG 31169 / CIP 107868 / KCTC 3260 / NRRL B-441</strain>
    </source>
</reference>
<keyword id="KW-0963">Cytoplasm</keyword>
<keyword id="KW-0227">DNA damage</keyword>
<keyword id="KW-0234">DNA repair</keyword>
<keyword id="KW-0378">Hydrolase</keyword>
<keyword id="KW-1185">Reference proteome</keyword>
<comment type="function">
    <text evidence="1">Excises uracil residues from the DNA which can arise as a result of misincorporation of dUMP residues by DNA polymerase or due to deamination of cytosine.</text>
</comment>
<comment type="catalytic activity">
    <reaction evidence="1">
        <text>Hydrolyzes single-stranded DNA or mismatched double-stranded DNA and polynucleotides, releasing free uracil.</text>
        <dbReference type="EC" id="3.2.2.27"/>
    </reaction>
</comment>
<comment type="subcellular location">
    <subcellularLocation>
        <location evidence="1">Cytoplasm</location>
    </subcellularLocation>
</comment>
<comment type="similarity">
    <text evidence="1">Belongs to the uracil-DNA glycosylase (UDG) superfamily. UNG family.</text>
</comment>
<organism>
    <name type="scientific">Lacticaseibacillus paracasei (strain ATCC 334 / BCRC 17002 / CCUG 31169 / CIP 107868 / KCTC 3260 / NRRL B-441)</name>
    <name type="common">Lactobacillus paracasei</name>
    <dbReference type="NCBI Taxonomy" id="321967"/>
    <lineage>
        <taxon>Bacteria</taxon>
        <taxon>Bacillati</taxon>
        <taxon>Bacillota</taxon>
        <taxon>Bacilli</taxon>
        <taxon>Lactobacillales</taxon>
        <taxon>Lactobacillaceae</taxon>
        <taxon>Lacticaseibacillus</taxon>
    </lineage>
</organism>
<sequence>MKTLIHNDWQTVLEPVFESPEYAQLHAFLKEEYATKTIYPEMHHIFQAFEWTPFHDVKVVILGQDPYHNPRQAVGASFAVAPGVALPPSLQNIYKELQSDLGYPPVHHGYLKAWADQGVLLLNAVLTVQAGEAYSHQNHGWEELTDAAIAALSARGGVVFILWGNAAKKKAAVIDTSKNAIIASAHPSPLSASRGFFGSRPFSRTNAALEKMGEAPINWQLPETVKAD</sequence>
<name>UNG_LACP3</name>
<feature type="chain" id="PRO_1000009903" description="Uracil-DNA glycosylase">
    <location>
        <begin position="1"/>
        <end position="228"/>
    </location>
</feature>
<feature type="active site" description="Proton acceptor" evidence="1">
    <location>
        <position position="65"/>
    </location>
</feature>
<dbReference type="EC" id="3.2.2.27" evidence="1"/>
<dbReference type="EMBL" id="CP000423">
    <property type="protein sequence ID" value="ABJ69791.1"/>
    <property type="molecule type" value="Genomic_DNA"/>
</dbReference>
<dbReference type="RefSeq" id="WP_003564334.1">
    <property type="nucleotide sequence ID" value="NC_008526.1"/>
</dbReference>
<dbReference type="RefSeq" id="YP_806233.1">
    <property type="nucleotide sequence ID" value="NC_008526.1"/>
</dbReference>
<dbReference type="SMR" id="Q03AI1"/>
<dbReference type="STRING" id="321967.LSEI_0995"/>
<dbReference type="PaxDb" id="321967-LSEI_0995"/>
<dbReference type="KEGG" id="lca:LSEI_0995"/>
<dbReference type="PATRIC" id="fig|321967.11.peg.968"/>
<dbReference type="HOGENOM" id="CLU_032162_3_0_9"/>
<dbReference type="Proteomes" id="UP000001651">
    <property type="component" value="Chromosome"/>
</dbReference>
<dbReference type="GO" id="GO:0005737">
    <property type="term" value="C:cytoplasm"/>
    <property type="evidence" value="ECO:0007669"/>
    <property type="project" value="UniProtKB-SubCell"/>
</dbReference>
<dbReference type="GO" id="GO:0004844">
    <property type="term" value="F:uracil DNA N-glycosylase activity"/>
    <property type="evidence" value="ECO:0007669"/>
    <property type="project" value="UniProtKB-UniRule"/>
</dbReference>
<dbReference type="GO" id="GO:0097510">
    <property type="term" value="P:base-excision repair, AP site formation via deaminated base removal"/>
    <property type="evidence" value="ECO:0007669"/>
    <property type="project" value="TreeGrafter"/>
</dbReference>
<dbReference type="CDD" id="cd10027">
    <property type="entry name" value="UDG-F1-like"/>
    <property type="match status" value="1"/>
</dbReference>
<dbReference type="FunFam" id="3.40.470.10:FF:000001">
    <property type="entry name" value="Uracil-DNA glycosylase"/>
    <property type="match status" value="1"/>
</dbReference>
<dbReference type="Gene3D" id="3.40.470.10">
    <property type="entry name" value="Uracil-DNA glycosylase-like domain"/>
    <property type="match status" value="1"/>
</dbReference>
<dbReference type="HAMAP" id="MF_00148">
    <property type="entry name" value="UDG"/>
    <property type="match status" value="1"/>
</dbReference>
<dbReference type="InterPro" id="IPR002043">
    <property type="entry name" value="UDG_fam1"/>
</dbReference>
<dbReference type="InterPro" id="IPR018085">
    <property type="entry name" value="Ura-DNA_Glyclase_AS"/>
</dbReference>
<dbReference type="InterPro" id="IPR005122">
    <property type="entry name" value="Uracil-DNA_glycosylase-like"/>
</dbReference>
<dbReference type="InterPro" id="IPR036895">
    <property type="entry name" value="Uracil-DNA_glycosylase-like_sf"/>
</dbReference>
<dbReference type="NCBIfam" id="NF003588">
    <property type="entry name" value="PRK05254.1-1"/>
    <property type="match status" value="1"/>
</dbReference>
<dbReference type="NCBIfam" id="NF003589">
    <property type="entry name" value="PRK05254.1-2"/>
    <property type="match status" value="1"/>
</dbReference>
<dbReference type="NCBIfam" id="NF003591">
    <property type="entry name" value="PRK05254.1-4"/>
    <property type="match status" value="1"/>
</dbReference>
<dbReference type="NCBIfam" id="NF003592">
    <property type="entry name" value="PRK05254.1-5"/>
    <property type="match status" value="1"/>
</dbReference>
<dbReference type="NCBIfam" id="TIGR00628">
    <property type="entry name" value="ung"/>
    <property type="match status" value="1"/>
</dbReference>
<dbReference type="PANTHER" id="PTHR11264">
    <property type="entry name" value="URACIL-DNA GLYCOSYLASE"/>
    <property type="match status" value="1"/>
</dbReference>
<dbReference type="PANTHER" id="PTHR11264:SF0">
    <property type="entry name" value="URACIL-DNA GLYCOSYLASE"/>
    <property type="match status" value="1"/>
</dbReference>
<dbReference type="Pfam" id="PF03167">
    <property type="entry name" value="UDG"/>
    <property type="match status" value="1"/>
</dbReference>
<dbReference type="SMART" id="SM00986">
    <property type="entry name" value="UDG"/>
    <property type="match status" value="1"/>
</dbReference>
<dbReference type="SMART" id="SM00987">
    <property type="entry name" value="UreE_C"/>
    <property type="match status" value="1"/>
</dbReference>
<dbReference type="SUPFAM" id="SSF52141">
    <property type="entry name" value="Uracil-DNA glycosylase-like"/>
    <property type="match status" value="1"/>
</dbReference>
<dbReference type="PROSITE" id="PS00130">
    <property type="entry name" value="U_DNA_GLYCOSYLASE"/>
    <property type="match status" value="1"/>
</dbReference>
<protein>
    <recommendedName>
        <fullName evidence="1">Uracil-DNA glycosylase</fullName>
        <shortName evidence="1">UDG</shortName>
        <ecNumber evidence="1">3.2.2.27</ecNumber>
    </recommendedName>
</protein>
<evidence type="ECO:0000255" key="1">
    <source>
        <dbReference type="HAMAP-Rule" id="MF_00148"/>
    </source>
</evidence>
<gene>
    <name evidence="1" type="primary">ung</name>
    <name type="ordered locus">LSEI_0995</name>
</gene>
<proteinExistence type="inferred from homology"/>